<keyword id="KW-0131">Cell cycle</keyword>
<keyword id="KW-0132">Cell division</keyword>
<keyword id="KW-0175">Coiled coil</keyword>
<keyword id="KW-0472">Membrane</keyword>
<keyword id="KW-0498">Mitosis</keyword>
<keyword id="KW-0539">Nucleus</keyword>
<keyword id="KW-1185">Reference proteome</keyword>
<keyword id="KW-0812">Transmembrane</keyword>
<keyword id="KW-1133">Transmembrane helix</keyword>
<protein>
    <recommendedName>
        <fullName>Sun domain-containing protein 1</fullName>
    </recommendedName>
</protein>
<dbReference type="EMBL" id="AAFI02000008">
    <property type="protein sequence ID" value="EAL71072.1"/>
    <property type="molecule type" value="Genomic_DNA"/>
</dbReference>
<dbReference type="RefSeq" id="XP_644924.1">
    <property type="nucleotide sequence ID" value="XM_639832.1"/>
</dbReference>
<dbReference type="SMR" id="Q558Z2"/>
<dbReference type="FunCoup" id="Q558Z2">
    <property type="interactions" value="3"/>
</dbReference>
<dbReference type="STRING" id="44689.Q558Z2"/>
<dbReference type="TCDB" id="1.I.1.1.5">
    <property type="family name" value="the nuclear pore complex (npc) family"/>
</dbReference>
<dbReference type="PaxDb" id="44689-DDB0219949"/>
<dbReference type="EnsemblProtists" id="EAL71072">
    <property type="protein sequence ID" value="EAL71072"/>
    <property type="gene ID" value="DDB_G0272869"/>
</dbReference>
<dbReference type="GeneID" id="8618603"/>
<dbReference type="KEGG" id="ddi:DDB_G0272869"/>
<dbReference type="dictyBase" id="DDB_G0272869">
    <property type="gene designation" value="sun1"/>
</dbReference>
<dbReference type="VEuPathDB" id="AmoebaDB:DDB_G0272869"/>
<dbReference type="eggNOG" id="KOG2687">
    <property type="taxonomic scope" value="Eukaryota"/>
</dbReference>
<dbReference type="HOGENOM" id="CLU_320658_0_0_1"/>
<dbReference type="InParanoid" id="Q558Z2"/>
<dbReference type="OMA" id="NISHHID"/>
<dbReference type="PRO" id="PR:Q558Z2"/>
<dbReference type="Proteomes" id="UP000002195">
    <property type="component" value="Chromosome 2"/>
</dbReference>
<dbReference type="GO" id="GO:0005635">
    <property type="term" value="C:nuclear envelope"/>
    <property type="evidence" value="ECO:0000314"/>
    <property type="project" value="dictyBase"/>
</dbReference>
<dbReference type="GO" id="GO:0005637">
    <property type="term" value="C:nuclear inner membrane"/>
    <property type="evidence" value="ECO:0000314"/>
    <property type="project" value="dictyBase"/>
</dbReference>
<dbReference type="GO" id="GO:0005640">
    <property type="term" value="C:nuclear outer membrane"/>
    <property type="evidence" value="ECO:0000314"/>
    <property type="project" value="dictyBase"/>
</dbReference>
<dbReference type="GO" id="GO:0005654">
    <property type="term" value="C:nucleoplasm"/>
    <property type="evidence" value="ECO:0000314"/>
    <property type="project" value="dictyBase"/>
</dbReference>
<dbReference type="GO" id="GO:0003682">
    <property type="term" value="F:chromatin binding"/>
    <property type="evidence" value="ECO:0000314"/>
    <property type="project" value="dictyBase"/>
</dbReference>
<dbReference type="GO" id="GO:0003677">
    <property type="term" value="F:DNA binding"/>
    <property type="evidence" value="ECO:0000314"/>
    <property type="project" value="dictyBase"/>
</dbReference>
<dbReference type="GO" id="GO:0042802">
    <property type="term" value="F:identical protein binding"/>
    <property type="evidence" value="ECO:0000353"/>
    <property type="project" value="dictyBase"/>
</dbReference>
<dbReference type="GO" id="GO:0043495">
    <property type="term" value="F:protein-membrane adaptor activity"/>
    <property type="evidence" value="ECO:0000318"/>
    <property type="project" value="GO_Central"/>
</dbReference>
<dbReference type="GO" id="GO:0051301">
    <property type="term" value="P:cell division"/>
    <property type="evidence" value="ECO:0007669"/>
    <property type="project" value="UniProtKB-KW"/>
</dbReference>
<dbReference type="GO" id="GO:0034508">
    <property type="term" value="P:centromere complex assembly"/>
    <property type="evidence" value="ECO:0000315"/>
    <property type="project" value="dictyBase"/>
</dbReference>
<dbReference type="GO" id="GO:0007098">
    <property type="term" value="P:centrosome cycle"/>
    <property type="evidence" value="ECO:0000315"/>
    <property type="project" value="dictyBase"/>
</dbReference>
<dbReference type="GO" id="GO:0051642">
    <property type="term" value="P:centrosome localization"/>
    <property type="evidence" value="ECO:0000315"/>
    <property type="project" value="dictyBase"/>
</dbReference>
<dbReference type="GO" id="GO:0000070">
    <property type="term" value="P:mitotic sister chromatid segregation"/>
    <property type="evidence" value="ECO:0000315"/>
    <property type="project" value="dictyBase"/>
</dbReference>
<dbReference type="GO" id="GO:0006997">
    <property type="term" value="P:nucleus organization"/>
    <property type="evidence" value="ECO:0000315"/>
    <property type="project" value="dictyBase"/>
</dbReference>
<dbReference type="FunFam" id="2.60.120.260:FF:000333">
    <property type="entry name" value="Sun domain-containing protein 1"/>
    <property type="match status" value="1"/>
</dbReference>
<dbReference type="Gene3D" id="2.60.120.260">
    <property type="entry name" value="Galactose-binding domain-like"/>
    <property type="match status" value="1"/>
</dbReference>
<dbReference type="InterPro" id="IPR045119">
    <property type="entry name" value="SUN1-5"/>
</dbReference>
<dbReference type="InterPro" id="IPR012919">
    <property type="entry name" value="SUN_dom"/>
</dbReference>
<dbReference type="PANTHER" id="PTHR12911:SF8">
    <property type="entry name" value="KLAROID PROTEIN-RELATED"/>
    <property type="match status" value="1"/>
</dbReference>
<dbReference type="PANTHER" id="PTHR12911">
    <property type="entry name" value="SAD1/UNC-84-LIKE PROTEIN-RELATED"/>
    <property type="match status" value="1"/>
</dbReference>
<dbReference type="Pfam" id="PF07738">
    <property type="entry name" value="Sad1_UNC"/>
    <property type="match status" value="1"/>
</dbReference>
<dbReference type="SUPFAM" id="SSF81995">
    <property type="entry name" value="beta-sandwich domain of Sec23/24"/>
    <property type="match status" value="1"/>
</dbReference>
<dbReference type="PROSITE" id="PS51469">
    <property type="entry name" value="SUN"/>
    <property type="match status" value="1"/>
</dbReference>
<proteinExistence type="evidence at protein level"/>
<sequence length="905" mass="104743">MSGDYKPNYQSSPSRKRLPLQSKDQASIYKYQTPSTLNLYNNTVNNNSSNNSNNHLLHNSNPNSSYLYDSSKQYSNQINIRNNSNSNSNTNNITSKKASSSYSINNKVDHNSHNNNDDDDIEDDVDINYSTNNASSNILHNRFSNSNKDDSYIDYSTDENPKILKQPQPLYNHLNNQIQQQQQQQQQQQQQQQQQQQQQQQQQQQQQQQQQQQRNNNNNSNSSNNNNTSTTIKRNNQQIDNNSNKNIISKFIGDPWKNFYYGSNKSLWPFERNNNSNNSSNNNNKVNFKQAIWIFIFSVLFIGCLLGLFSTNFYGIHIYFPSFSTTKTNSPFNSTNNNIQFSNLITKEQLYPIIDEYFKKNEILKSYNKLFEKIENDIKYLSEREQYKDIINEIKEELKLVKLSNMDEDRVNQLISKMINHYNNNENNKQELKELLSKSIEELTKLKSDSKEQLIQISTESMNQLGQLKSESINQLGQVKSESIDKFQSTLKSLSKEEQSKIEREFNHQFNQLNKDADQLLSQHSLKIEKLREEINENQQSSLLKLTQEYKQLEERLKEFSSKLQQSISSSSMDQFESWKLVFIKDIEERINKESSKLTNQYIQLTQQFTKIQSFIKDNPSIDSLTNTIESLEGIKLLIEDILEVYSADKIAKVDYALGLAGASIEYNALHYRVSETYPPIKGSGSGSGSGGANGNSLGLYYYNLATNWIFPQPKPNPPETILDPMVNTGSCWGFYTGNGTIVIRLAKKIAITEVTMEHISSNISHHIDSAPKEFQVFGLINSSDIGQSLGVFTYDTTINRHLQTFKVNKIQSTTTTTTNQDQNDDDNIQEFSHVALRILSNHGYRYTCIYRFRVHGYQIPHPEQEQIQIIQEEQSFKQEEINQQQIEQIEQIEQIEKQQQSDEL</sequence>
<evidence type="ECO:0000255" key="1"/>
<evidence type="ECO:0000255" key="2">
    <source>
        <dbReference type="PROSITE-ProRule" id="PRU00802"/>
    </source>
</evidence>
<evidence type="ECO:0000256" key="3">
    <source>
        <dbReference type="SAM" id="MobiDB-lite"/>
    </source>
</evidence>
<evidence type="ECO:0000269" key="4">
    <source>
    </source>
</evidence>
<evidence type="ECO:0000269" key="5">
    <source>
    </source>
</evidence>
<reference key="1">
    <citation type="journal article" date="2002" name="Nature">
        <title>Sequence and analysis of chromosome 2 of Dictyostelium discoideum.</title>
        <authorList>
            <person name="Gloeckner G."/>
            <person name="Eichinger L."/>
            <person name="Szafranski K."/>
            <person name="Pachebat J.A."/>
            <person name="Bankier A.T."/>
            <person name="Dear P.H."/>
            <person name="Lehmann R."/>
            <person name="Baumgart C."/>
            <person name="Parra G."/>
            <person name="Abril J.F."/>
            <person name="Guigo R."/>
            <person name="Kumpf K."/>
            <person name="Tunggal B."/>
            <person name="Cox E.C."/>
            <person name="Quail M.A."/>
            <person name="Platzer M."/>
            <person name="Rosenthal A."/>
            <person name="Noegel A.A."/>
        </authorList>
    </citation>
    <scope>NUCLEOTIDE SEQUENCE [LARGE SCALE GENOMIC DNA]</scope>
    <source>
        <strain>AX4</strain>
    </source>
</reference>
<reference key="2">
    <citation type="journal article" date="2005" name="Nature">
        <title>The genome of the social amoeba Dictyostelium discoideum.</title>
        <authorList>
            <person name="Eichinger L."/>
            <person name="Pachebat J.A."/>
            <person name="Gloeckner G."/>
            <person name="Rajandream M.A."/>
            <person name="Sucgang R."/>
            <person name="Berriman M."/>
            <person name="Song J."/>
            <person name="Olsen R."/>
            <person name="Szafranski K."/>
            <person name="Xu Q."/>
            <person name="Tunggal B."/>
            <person name="Kummerfeld S."/>
            <person name="Madera M."/>
            <person name="Konfortov B.A."/>
            <person name="Rivero F."/>
            <person name="Bankier A.T."/>
            <person name="Lehmann R."/>
            <person name="Hamlin N."/>
            <person name="Davies R."/>
            <person name="Gaudet P."/>
            <person name="Fey P."/>
            <person name="Pilcher K."/>
            <person name="Chen G."/>
            <person name="Saunders D."/>
            <person name="Sodergren E.J."/>
            <person name="Davis P."/>
            <person name="Kerhornou A."/>
            <person name="Nie X."/>
            <person name="Hall N."/>
            <person name="Anjard C."/>
            <person name="Hemphill L."/>
            <person name="Bason N."/>
            <person name="Farbrother P."/>
            <person name="Desany B."/>
            <person name="Just E."/>
            <person name="Morio T."/>
            <person name="Rost R."/>
            <person name="Churcher C.M."/>
            <person name="Cooper J."/>
            <person name="Haydock S."/>
            <person name="van Driessche N."/>
            <person name="Cronin A."/>
            <person name="Goodhead I."/>
            <person name="Muzny D.M."/>
            <person name="Mourier T."/>
            <person name="Pain A."/>
            <person name="Lu M."/>
            <person name="Harper D."/>
            <person name="Lindsay R."/>
            <person name="Hauser H."/>
            <person name="James K.D."/>
            <person name="Quiles M."/>
            <person name="Madan Babu M."/>
            <person name="Saito T."/>
            <person name="Buchrieser C."/>
            <person name="Wardroper A."/>
            <person name="Felder M."/>
            <person name="Thangavelu M."/>
            <person name="Johnson D."/>
            <person name="Knights A."/>
            <person name="Loulseged H."/>
            <person name="Mungall K.L."/>
            <person name="Oliver K."/>
            <person name="Price C."/>
            <person name="Quail M.A."/>
            <person name="Urushihara H."/>
            <person name="Hernandez J."/>
            <person name="Rabbinowitsch E."/>
            <person name="Steffen D."/>
            <person name="Sanders M."/>
            <person name="Ma J."/>
            <person name="Kohara Y."/>
            <person name="Sharp S."/>
            <person name="Simmonds M.N."/>
            <person name="Spiegler S."/>
            <person name="Tivey A."/>
            <person name="Sugano S."/>
            <person name="White B."/>
            <person name="Walker D."/>
            <person name="Woodward J.R."/>
            <person name="Winckler T."/>
            <person name="Tanaka Y."/>
            <person name="Shaulsky G."/>
            <person name="Schleicher M."/>
            <person name="Weinstock G.M."/>
            <person name="Rosenthal A."/>
            <person name="Cox E.C."/>
            <person name="Chisholm R.L."/>
            <person name="Gibbs R.A."/>
            <person name="Loomis W.F."/>
            <person name="Platzer M."/>
            <person name="Kay R.R."/>
            <person name="Williams J.G."/>
            <person name="Dear P.H."/>
            <person name="Noegel A.A."/>
            <person name="Barrell B.G."/>
            <person name="Kuspa A."/>
        </authorList>
    </citation>
    <scope>NUCLEOTIDE SEQUENCE [LARGE SCALE GENOMIC DNA]</scope>
    <source>
        <strain>AX4</strain>
    </source>
</reference>
<reference key="3">
    <citation type="journal article" date="2008" name="Traffic">
        <title>Dictyostelium Sun-1 connects the centrosome to chromatin and ensures genome stability.</title>
        <authorList>
            <person name="Xiong H."/>
            <person name="Rivero F."/>
            <person name="Euteneuer U."/>
            <person name="Mondal S."/>
            <person name="Mana-Capelli S."/>
            <person name="Larochelle D."/>
            <person name="Vogel A."/>
            <person name="Gassen B."/>
            <person name="Noegel A.A."/>
        </authorList>
    </citation>
    <scope>FUNCTION</scope>
    <scope>SUBCELLULAR LOCATION</scope>
    <scope>TOPOLOGY</scope>
    <scope>SUBUNIT</scope>
</reference>
<reference key="4">
    <citation type="journal article" date="2009" name="Eur. J. Cell Biol.">
        <title>Dictyostelium Sun1 is a dynamic membrane protein of both nuclear membranes and required for centrosomal association with clustered centromeres.</title>
        <authorList>
            <person name="Schulz I."/>
            <person name="Baumann O."/>
            <person name="Samereier M."/>
            <person name="Zoglmeier C."/>
            <person name="Graef R."/>
        </authorList>
    </citation>
    <scope>SUBCELLULAR LOCATION</scope>
    <scope>FUNCTION</scope>
    <scope>DISRUPTION PHENOTYPE</scope>
</reference>
<accession>Q558Z2</accession>
<comment type="function">
    <text evidence="4 5">May have an important role in defining the spacing of the nuclear envelope lumen. Essential for centrosome attachment to the nucleus, maintenance of correct ploidy, proper mitosis, association of the centromere cluster with the centrosome and the maintenance of genome stability. Requires direct chromatin binding for inner nuclear membrane targeting.</text>
</comment>
<comment type="subunit">
    <text evidence="4">Homodimer and homooligomer.</text>
</comment>
<comment type="subcellular location">
    <subcellularLocation>
        <location evidence="4 5">Nucleus membrane</location>
        <topology evidence="4 5">Single-pass membrane protein</topology>
        <orientation evidence="4 5">Nucleoplasmic side</orientation>
    </subcellularLocation>
</comment>
<comment type="disruption phenotype">
    <text evidence="5">Shows significant reduced growth.</text>
</comment>
<name>SUN1_DICDI</name>
<feature type="chain" id="PRO_0000390618" description="Sun domain-containing protein 1">
    <location>
        <begin position="1"/>
        <end position="905"/>
    </location>
</feature>
<feature type="topological domain" description="Nuclear" evidence="1">
    <location>
        <begin position="1"/>
        <end position="290"/>
    </location>
</feature>
<feature type="transmembrane region" description="Helical" evidence="1">
    <location>
        <begin position="291"/>
        <end position="311"/>
    </location>
</feature>
<feature type="topological domain" description="Perinuclear space" evidence="1">
    <location>
        <begin position="312"/>
        <end position="905"/>
    </location>
</feature>
<feature type="domain" description="SUN" evidence="2">
    <location>
        <begin position="662"/>
        <end position="860"/>
    </location>
</feature>
<feature type="region of interest" description="Disordered" evidence="3">
    <location>
        <begin position="1"/>
        <end position="21"/>
    </location>
</feature>
<feature type="region of interest" description="Disordered" evidence="3">
    <location>
        <begin position="41"/>
        <end position="166"/>
    </location>
</feature>
<feature type="region of interest" description="Disordered" evidence="3">
    <location>
        <begin position="207"/>
        <end position="242"/>
    </location>
</feature>
<feature type="coiled-coil region" evidence="1">
    <location>
        <begin position="170"/>
        <end position="221"/>
    </location>
</feature>
<feature type="coiled-coil region" evidence="1">
    <location>
        <begin position="359"/>
        <end position="456"/>
    </location>
</feature>
<feature type="coiled-coil region" evidence="1">
    <location>
        <begin position="504"/>
        <end position="609"/>
    </location>
</feature>
<feature type="coiled-coil region" evidence="1">
    <location>
        <begin position="864"/>
        <end position="901"/>
    </location>
</feature>
<feature type="compositionally biased region" description="Low complexity" evidence="3">
    <location>
        <begin position="41"/>
        <end position="67"/>
    </location>
</feature>
<feature type="compositionally biased region" description="Low complexity" evidence="3">
    <location>
        <begin position="75"/>
        <end position="101"/>
    </location>
</feature>
<feature type="compositionally biased region" description="Basic and acidic residues" evidence="3">
    <location>
        <begin position="107"/>
        <end position="116"/>
    </location>
</feature>
<feature type="compositionally biased region" description="Acidic residues" evidence="3">
    <location>
        <begin position="117"/>
        <end position="126"/>
    </location>
</feature>
<feature type="compositionally biased region" description="Polar residues" evidence="3">
    <location>
        <begin position="129"/>
        <end position="146"/>
    </location>
</feature>
<feature type="compositionally biased region" description="Low complexity" evidence="3">
    <location>
        <begin position="207"/>
        <end position="227"/>
    </location>
</feature>
<gene>
    <name type="primary">sun1</name>
    <name type="ORF">DDB_G0272869</name>
</gene>
<organism>
    <name type="scientific">Dictyostelium discoideum</name>
    <name type="common">Social amoeba</name>
    <dbReference type="NCBI Taxonomy" id="44689"/>
    <lineage>
        <taxon>Eukaryota</taxon>
        <taxon>Amoebozoa</taxon>
        <taxon>Evosea</taxon>
        <taxon>Eumycetozoa</taxon>
        <taxon>Dictyostelia</taxon>
        <taxon>Dictyosteliales</taxon>
        <taxon>Dictyosteliaceae</taxon>
        <taxon>Dictyostelium</taxon>
    </lineage>
</organism>